<dbReference type="EMBL" id="CP000100">
    <property type="protein sequence ID" value="ABB58233.1"/>
    <property type="molecule type" value="Genomic_DNA"/>
</dbReference>
<dbReference type="RefSeq" id="WP_011244204.1">
    <property type="nucleotide sequence ID" value="NZ_JACJTX010000001.1"/>
</dbReference>
<dbReference type="SMR" id="Q31L36"/>
<dbReference type="STRING" id="1140.Synpcc7942_2203"/>
<dbReference type="PaxDb" id="1140-Synpcc7942_2203"/>
<dbReference type="GeneID" id="72431086"/>
<dbReference type="KEGG" id="syf:Synpcc7942_2203"/>
<dbReference type="eggNOG" id="COG0216">
    <property type="taxonomic scope" value="Bacteria"/>
</dbReference>
<dbReference type="HOGENOM" id="CLU_036856_0_1_3"/>
<dbReference type="OrthoDB" id="9806673at2"/>
<dbReference type="BioCyc" id="SYNEL:SYNPCC7942_2203-MONOMER"/>
<dbReference type="Proteomes" id="UP000889800">
    <property type="component" value="Chromosome"/>
</dbReference>
<dbReference type="GO" id="GO:0005737">
    <property type="term" value="C:cytoplasm"/>
    <property type="evidence" value="ECO:0007669"/>
    <property type="project" value="UniProtKB-SubCell"/>
</dbReference>
<dbReference type="GO" id="GO:0016149">
    <property type="term" value="F:translation release factor activity, codon specific"/>
    <property type="evidence" value="ECO:0007669"/>
    <property type="project" value="UniProtKB-UniRule"/>
</dbReference>
<dbReference type="FunFam" id="3.30.160.20:FF:000004">
    <property type="entry name" value="Peptide chain release factor 1"/>
    <property type="match status" value="1"/>
</dbReference>
<dbReference type="FunFam" id="3.30.70.1660:FF:000002">
    <property type="entry name" value="Peptide chain release factor 1"/>
    <property type="match status" value="1"/>
</dbReference>
<dbReference type="FunFam" id="3.30.70.1660:FF:000014">
    <property type="entry name" value="Peptide chain release factor 1"/>
    <property type="match status" value="1"/>
</dbReference>
<dbReference type="Gene3D" id="3.30.160.20">
    <property type="match status" value="1"/>
</dbReference>
<dbReference type="Gene3D" id="3.30.70.1660">
    <property type="match status" value="1"/>
</dbReference>
<dbReference type="Gene3D" id="6.10.140.1950">
    <property type="match status" value="1"/>
</dbReference>
<dbReference type="HAMAP" id="MF_00093">
    <property type="entry name" value="Rel_fac_1"/>
    <property type="match status" value="1"/>
</dbReference>
<dbReference type="InterPro" id="IPR005139">
    <property type="entry name" value="PCRF"/>
</dbReference>
<dbReference type="InterPro" id="IPR000352">
    <property type="entry name" value="Pep_chain_release_fac_I"/>
</dbReference>
<dbReference type="InterPro" id="IPR045853">
    <property type="entry name" value="Pep_chain_release_fac_I_sf"/>
</dbReference>
<dbReference type="InterPro" id="IPR050057">
    <property type="entry name" value="Prokaryotic/Mito_RF"/>
</dbReference>
<dbReference type="InterPro" id="IPR004373">
    <property type="entry name" value="RF-1"/>
</dbReference>
<dbReference type="NCBIfam" id="TIGR00019">
    <property type="entry name" value="prfA"/>
    <property type="match status" value="1"/>
</dbReference>
<dbReference type="NCBIfam" id="NF001859">
    <property type="entry name" value="PRK00591.1"/>
    <property type="match status" value="1"/>
</dbReference>
<dbReference type="PANTHER" id="PTHR43804">
    <property type="entry name" value="LD18447P"/>
    <property type="match status" value="1"/>
</dbReference>
<dbReference type="PANTHER" id="PTHR43804:SF8">
    <property type="entry name" value="PEPTIDE CHAIN RELEASE FACTOR APG3, CHLOROPLASTIC"/>
    <property type="match status" value="1"/>
</dbReference>
<dbReference type="Pfam" id="PF03462">
    <property type="entry name" value="PCRF"/>
    <property type="match status" value="1"/>
</dbReference>
<dbReference type="Pfam" id="PF00472">
    <property type="entry name" value="RF-1"/>
    <property type="match status" value="1"/>
</dbReference>
<dbReference type="SMART" id="SM00937">
    <property type="entry name" value="PCRF"/>
    <property type="match status" value="1"/>
</dbReference>
<dbReference type="SUPFAM" id="SSF75620">
    <property type="entry name" value="Release factor"/>
    <property type="match status" value="1"/>
</dbReference>
<dbReference type="PROSITE" id="PS00745">
    <property type="entry name" value="RF_PROK_I"/>
    <property type="match status" value="1"/>
</dbReference>
<name>RF1_SYNE7</name>
<accession>Q31L36</accession>
<gene>
    <name evidence="1" type="primary">prfA</name>
    <name type="ordered locus">Synpcc7942_2203</name>
</gene>
<comment type="function">
    <text evidence="1">Peptide chain release factor 1 directs the termination of translation in response to the peptide chain termination codons UAG and UAA.</text>
</comment>
<comment type="subcellular location">
    <subcellularLocation>
        <location evidence="1">Cytoplasm</location>
    </subcellularLocation>
</comment>
<comment type="PTM">
    <text evidence="1">Methylated by PrmC. Methylation increases the termination efficiency of RF1.</text>
</comment>
<comment type="similarity">
    <text evidence="1">Belongs to the prokaryotic/mitochondrial release factor family.</text>
</comment>
<organism>
    <name type="scientific">Synechococcus elongatus (strain ATCC 33912 / PCC 7942 / FACHB-805)</name>
    <name type="common">Anacystis nidulans R2</name>
    <dbReference type="NCBI Taxonomy" id="1140"/>
    <lineage>
        <taxon>Bacteria</taxon>
        <taxon>Bacillati</taxon>
        <taxon>Cyanobacteriota</taxon>
        <taxon>Cyanophyceae</taxon>
        <taxon>Synechococcales</taxon>
        <taxon>Synechococcaceae</taxon>
        <taxon>Synechococcus</taxon>
    </lineage>
</organism>
<evidence type="ECO:0000255" key="1">
    <source>
        <dbReference type="HAMAP-Rule" id="MF_00093"/>
    </source>
</evidence>
<sequence length="368" mass="41575">MAEPYLIEKLQSVEQTFQDLTRRLADPEIATDPREFQRVARMRSSMEELVTTYEEWKQRDAELKGAREILRESSGDPELREMAALEVNELEALLVSLEERLKILLLPRDPNDDKNIMLEIRAGTGGDEASLWAGDLLRMYSRYAESQGWRVKLLSESTGELGGYKEAILEIQGESVYSKLKFEAGVHRVQRVPATEAGGRVHTSTATVAIMPEVDEVEVSIDPKDIELTTARSGGAGGQNVNKVETAVDLFHKPTGIRIFCTEERSQLQNRERAMQILRAKLYEMKLQEQQEAVSSMRRSQVGTGSRSEKIRTYNYKDNRATDHRLGLNFSLNPVLEGEIEEVIQACISKDQTEQLAQMAQDQEAAKV</sequence>
<reference key="1">
    <citation type="submission" date="2005-08" db="EMBL/GenBank/DDBJ databases">
        <title>Complete sequence of chromosome 1 of Synechococcus elongatus PCC 7942.</title>
        <authorList>
            <consortium name="US DOE Joint Genome Institute"/>
            <person name="Copeland A."/>
            <person name="Lucas S."/>
            <person name="Lapidus A."/>
            <person name="Barry K."/>
            <person name="Detter J.C."/>
            <person name="Glavina T."/>
            <person name="Hammon N."/>
            <person name="Israni S."/>
            <person name="Pitluck S."/>
            <person name="Schmutz J."/>
            <person name="Larimer F."/>
            <person name="Land M."/>
            <person name="Kyrpides N."/>
            <person name="Lykidis A."/>
            <person name="Golden S."/>
            <person name="Richardson P."/>
        </authorList>
    </citation>
    <scope>NUCLEOTIDE SEQUENCE [LARGE SCALE GENOMIC DNA]</scope>
    <source>
        <strain>ATCC 33912 / PCC 7942 / FACHB-805</strain>
    </source>
</reference>
<proteinExistence type="inferred from homology"/>
<protein>
    <recommendedName>
        <fullName evidence="1">Peptide chain release factor 1</fullName>
        <shortName evidence="1">RF-1</shortName>
    </recommendedName>
</protein>
<keyword id="KW-0963">Cytoplasm</keyword>
<keyword id="KW-0488">Methylation</keyword>
<keyword id="KW-0648">Protein biosynthesis</keyword>
<keyword id="KW-1185">Reference proteome</keyword>
<feature type="chain" id="PRO_0000263378" description="Peptide chain release factor 1">
    <location>
        <begin position="1"/>
        <end position="368"/>
    </location>
</feature>
<feature type="modified residue" description="N5-methylglutamine" evidence="1">
    <location>
        <position position="239"/>
    </location>
</feature>